<feature type="chain" id="PRO_0000379028" description="Protein crossbronx homolog">
    <location>
        <begin position="1"/>
        <end position="231"/>
    </location>
</feature>
<feature type="domain" description="UBC core" evidence="1">
    <location>
        <begin position="14"/>
        <end position="168"/>
    </location>
</feature>
<proteinExistence type="inferred from homology"/>
<evidence type="ECO:0000255" key="1">
    <source>
        <dbReference type="PROSITE-ProRule" id="PRU00388"/>
    </source>
</evidence>
<evidence type="ECO:0000305" key="2"/>
<gene>
    <name type="ORF">CPIJ015056</name>
</gene>
<comment type="similarity">
    <text evidence="1">Belongs to the ubiquitin-conjugating enzyme family. FTS subfamily.</text>
</comment>
<comment type="caution">
    <text evidence="2">Lacks the conserved Cys residue necessary for ubiquitin-conjugating enzyme E2 activity.</text>
</comment>
<name>AKTIP_CULQU</name>
<reference key="1">
    <citation type="submission" date="2007-03" db="EMBL/GenBank/DDBJ databases">
        <title>Annotation of Culex pipiens quinquefasciatus.</title>
        <authorList>
            <consortium name="The Broad Institute Genome Sequencing Platform"/>
            <person name="Atkinson P.W."/>
            <person name="Hemingway J."/>
            <person name="Christensen B.M."/>
            <person name="Higgs S."/>
            <person name="Kodira C.D."/>
            <person name="Hannick L.I."/>
            <person name="Megy K."/>
            <person name="O'Leary S.B."/>
            <person name="Pearson M."/>
            <person name="Haas B.J."/>
            <person name="Mauceli E."/>
            <person name="Wortman J.R."/>
            <person name="Lee N.H."/>
            <person name="Guigo R."/>
            <person name="Stanke M."/>
            <person name="Alvarado L."/>
            <person name="Amedeo P."/>
            <person name="Antoine C.H."/>
            <person name="Arensburger P."/>
            <person name="Bidwell S.L."/>
            <person name="Crawford M."/>
            <person name="Camaro F."/>
            <person name="Devon K."/>
            <person name="Engels R."/>
            <person name="Hammond M."/>
            <person name="Howarth C."/>
            <person name="Koehrsen M."/>
            <person name="Lawson D."/>
            <person name="Montgomery P."/>
            <person name="Nene V."/>
            <person name="Nusbaum C."/>
            <person name="Puiu D."/>
            <person name="Romero-Severson J."/>
            <person name="Severson D.W."/>
            <person name="Shumway M."/>
            <person name="Sisk P."/>
            <person name="Stolte C."/>
            <person name="Zeng Q."/>
            <person name="Eisenstadt E."/>
            <person name="Fraser-Liggett C.M."/>
            <person name="Strausberg R."/>
            <person name="Galagan J."/>
            <person name="Birren B."/>
            <person name="Collins F.H."/>
        </authorList>
    </citation>
    <scope>NUCLEOTIDE SEQUENCE [LARGE SCALE GENOMIC DNA]</scope>
    <source>
        <strain>JHB</strain>
    </source>
</reference>
<organism>
    <name type="scientific">Culex quinquefasciatus</name>
    <name type="common">Southern house mosquito</name>
    <name type="synonym">Culex pungens</name>
    <dbReference type="NCBI Taxonomy" id="7176"/>
    <lineage>
        <taxon>Eukaryota</taxon>
        <taxon>Metazoa</taxon>
        <taxon>Ecdysozoa</taxon>
        <taxon>Arthropoda</taxon>
        <taxon>Hexapoda</taxon>
        <taxon>Insecta</taxon>
        <taxon>Pterygota</taxon>
        <taxon>Neoptera</taxon>
        <taxon>Endopterygota</taxon>
        <taxon>Diptera</taxon>
        <taxon>Nematocera</taxon>
        <taxon>Culicoidea</taxon>
        <taxon>Culicidae</taxon>
        <taxon>Culicinae</taxon>
        <taxon>Culicini</taxon>
        <taxon>Culex</taxon>
        <taxon>Culex</taxon>
    </lineage>
</organism>
<sequence>MTLDSYDKLLGTVLQEYKILTEYKRLQSEDLGGIYVIPSHENSFVWFGVLFVRSGPYKNGVFRFTLTLPDKFPNDSAVPTVVFQSETFHPLVCPYNGTLELSEAFAKWKSGENHLWQVLKFIQYVFAHFEEYMAVAELTANNVAHELFQQSRADFLQRVEECVRLSQAKVYDPAPVQDRNYIVFEQFDGAVHGPVLESMKQGRANEVGTTPPSSGLSWVKEGVFQPLSKQG</sequence>
<accession>B0X6E8</accession>
<dbReference type="EMBL" id="DS232412">
    <property type="protein sequence ID" value="EDS41431.1"/>
    <property type="molecule type" value="Genomic_DNA"/>
</dbReference>
<dbReference type="RefSeq" id="XP_001865220.1">
    <property type="nucleotide sequence ID" value="XM_001865185.1"/>
</dbReference>
<dbReference type="SMR" id="B0X6E8"/>
<dbReference type="FunCoup" id="B0X6E8">
    <property type="interactions" value="1017"/>
</dbReference>
<dbReference type="STRING" id="7176.B0X6E8"/>
<dbReference type="EnsemblMetazoa" id="CPIJ015056-RA">
    <property type="protein sequence ID" value="CPIJ015056-PA"/>
    <property type="gene ID" value="CPIJ015056"/>
</dbReference>
<dbReference type="KEGG" id="cqu:CpipJ_CPIJ015056"/>
<dbReference type="CTD" id="47272"/>
<dbReference type="VEuPathDB" id="VectorBase:CPIJ015056"/>
<dbReference type="VEuPathDB" id="VectorBase:CQUJHB010720"/>
<dbReference type="eggNOG" id="KOG0429">
    <property type="taxonomic scope" value="Eukaryota"/>
</dbReference>
<dbReference type="HOGENOM" id="CLU_083049_1_0_1"/>
<dbReference type="InParanoid" id="B0X6E8"/>
<dbReference type="OMA" id="WGFPEWR"/>
<dbReference type="OrthoDB" id="5596422at2759"/>
<dbReference type="PhylomeDB" id="B0X6E8"/>
<dbReference type="Proteomes" id="UP000002320">
    <property type="component" value="Unassembled WGS sequence"/>
</dbReference>
<dbReference type="CDD" id="cd23814">
    <property type="entry name" value="UEV_AKTIP"/>
    <property type="match status" value="1"/>
</dbReference>
<dbReference type="Gene3D" id="3.10.110.10">
    <property type="entry name" value="Ubiquitin Conjugating Enzyme"/>
    <property type="match status" value="1"/>
</dbReference>
<dbReference type="InterPro" id="IPR050113">
    <property type="entry name" value="Ub_conjugating_enzyme"/>
</dbReference>
<dbReference type="InterPro" id="IPR000608">
    <property type="entry name" value="UBQ-conjugat_E2_core"/>
</dbReference>
<dbReference type="InterPro" id="IPR016135">
    <property type="entry name" value="UBQ-conjugating_enzyme/RWD"/>
</dbReference>
<dbReference type="PANTHER" id="PTHR24067">
    <property type="entry name" value="UBIQUITIN-CONJUGATING ENZYME E2"/>
    <property type="match status" value="1"/>
</dbReference>
<dbReference type="Pfam" id="PF00179">
    <property type="entry name" value="UQ_con"/>
    <property type="match status" value="1"/>
</dbReference>
<dbReference type="SMART" id="SM00212">
    <property type="entry name" value="UBCc"/>
    <property type="match status" value="1"/>
</dbReference>
<dbReference type="SUPFAM" id="SSF54495">
    <property type="entry name" value="UBC-like"/>
    <property type="match status" value="1"/>
</dbReference>
<dbReference type="PROSITE" id="PS50127">
    <property type="entry name" value="UBC_2"/>
    <property type="match status" value="1"/>
</dbReference>
<protein>
    <recommendedName>
        <fullName>Protein crossbronx homolog</fullName>
    </recommendedName>
</protein>
<keyword id="KW-1185">Reference proteome</keyword>